<dbReference type="EC" id="2.7.1.50" evidence="1"/>
<dbReference type="EMBL" id="CP001164">
    <property type="protein sequence ID" value="ACI34772.1"/>
    <property type="molecule type" value="Genomic_DNA"/>
</dbReference>
<dbReference type="RefSeq" id="WP_001195634.1">
    <property type="nucleotide sequence ID" value="NC_011353.1"/>
</dbReference>
<dbReference type="SMR" id="B5YV51"/>
<dbReference type="KEGG" id="ecf:ECH74115_3083"/>
<dbReference type="HOGENOM" id="CLU_019943_0_1_6"/>
<dbReference type="UniPathway" id="UPA00060">
    <property type="reaction ID" value="UER00139"/>
</dbReference>
<dbReference type="GO" id="GO:0005524">
    <property type="term" value="F:ATP binding"/>
    <property type="evidence" value="ECO:0007669"/>
    <property type="project" value="UniProtKB-UniRule"/>
</dbReference>
<dbReference type="GO" id="GO:0004417">
    <property type="term" value="F:hydroxyethylthiazole kinase activity"/>
    <property type="evidence" value="ECO:0007669"/>
    <property type="project" value="UniProtKB-UniRule"/>
</dbReference>
<dbReference type="GO" id="GO:0000287">
    <property type="term" value="F:magnesium ion binding"/>
    <property type="evidence" value="ECO:0007669"/>
    <property type="project" value="UniProtKB-UniRule"/>
</dbReference>
<dbReference type="GO" id="GO:0009228">
    <property type="term" value="P:thiamine biosynthetic process"/>
    <property type="evidence" value="ECO:0007669"/>
    <property type="project" value="UniProtKB-KW"/>
</dbReference>
<dbReference type="GO" id="GO:0009229">
    <property type="term" value="P:thiamine diphosphate biosynthetic process"/>
    <property type="evidence" value="ECO:0007669"/>
    <property type="project" value="UniProtKB-UniRule"/>
</dbReference>
<dbReference type="CDD" id="cd01170">
    <property type="entry name" value="THZ_kinase"/>
    <property type="match status" value="1"/>
</dbReference>
<dbReference type="FunFam" id="3.40.1190.20:FF:000015">
    <property type="entry name" value="Hydroxyethylthiazole kinase"/>
    <property type="match status" value="1"/>
</dbReference>
<dbReference type="Gene3D" id="3.40.1190.20">
    <property type="match status" value="1"/>
</dbReference>
<dbReference type="HAMAP" id="MF_00228">
    <property type="entry name" value="Thz_kinase"/>
    <property type="match status" value="1"/>
</dbReference>
<dbReference type="InterPro" id="IPR000417">
    <property type="entry name" value="Hyethyz_kinase"/>
</dbReference>
<dbReference type="InterPro" id="IPR029056">
    <property type="entry name" value="Ribokinase-like"/>
</dbReference>
<dbReference type="NCBIfam" id="NF006830">
    <property type="entry name" value="PRK09355.1"/>
    <property type="match status" value="1"/>
</dbReference>
<dbReference type="NCBIfam" id="TIGR00694">
    <property type="entry name" value="thiM"/>
    <property type="match status" value="1"/>
</dbReference>
<dbReference type="Pfam" id="PF02110">
    <property type="entry name" value="HK"/>
    <property type="match status" value="1"/>
</dbReference>
<dbReference type="PIRSF" id="PIRSF000513">
    <property type="entry name" value="Thz_kinase"/>
    <property type="match status" value="1"/>
</dbReference>
<dbReference type="PRINTS" id="PR01099">
    <property type="entry name" value="HYETHTZKNASE"/>
</dbReference>
<dbReference type="SUPFAM" id="SSF53613">
    <property type="entry name" value="Ribokinase-like"/>
    <property type="match status" value="1"/>
</dbReference>
<protein>
    <recommendedName>
        <fullName evidence="1">Hydroxyethylthiazole kinase</fullName>
        <ecNumber evidence="1">2.7.1.50</ecNumber>
    </recommendedName>
    <alternativeName>
        <fullName evidence="1">4-methyl-5-beta-hydroxyethylthiazole kinase</fullName>
        <shortName evidence="1">TH kinase</shortName>
        <shortName evidence="1">Thz kinase</shortName>
    </alternativeName>
</protein>
<accession>B5YV51</accession>
<sequence>MQVDLLSSAQSAHTLHLFHQHSPLVHCMTNDVVQTFTANTLLALGASPAMVIETEEASQFAAIASALLINVGTLTQPRAQAMRAAVEQAKSSQTPWTLDPVAVGALDYRRHFCHELLSFKPAAIRGNASEIMALAGVANGGRGVDTTDAAVNAIPAAQTLARETGAIVVVTGEVDYVTDGHRAVGIHGGDPLMTKVVGTGCALSAVVAACCALPGDMLENVASACHWMKQAGERAVARSEGPGSFVPHFLDALWQLTQEVQA</sequence>
<keyword id="KW-0067">ATP-binding</keyword>
<keyword id="KW-0418">Kinase</keyword>
<keyword id="KW-0460">Magnesium</keyword>
<keyword id="KW-0479">Metal-binding</keyword>
<keyword id="KW-0547">Nucleotide-binding</keyword>
<keyword id="KW-0784">Thiamine biosynthesis</keyword>
<keyword id="KW-0808">Transferase</keyword>
<evidence type="ECO:0000255" key="1">
    <source>
        <dbReference type="HAMAP-Rule" id="MF_00228"/>
    </source>
</evidence>
<proteinExistence type="inferred from homology"/>
<comment type="function">
    <text evidence="1">Catalyzes the phosphorylation of the hydroxyl group of 4-methyl-5-beta-hydroxyethylthiazole (THZ).</text>
</comment>
<comment type="catalytic activity">
    <reaction evidence="1">
        <text>5-(2-hydroxyethyl)-4-methylthiazole + ATP = 4-methyl-5-(2-phosphooxyethyl)-thiazole + ADP + H(+)</text>
        <dbReference type="Rhea" id="RHEA:24212"/>
        <dbReference type="ChEBI" id="CHEBI:15378"/>
        <dbReference type="ChEBI" id="CHEBI:17957"/>
        <dbReference type="ChEBI" id="CHEBI:30616"/>
        <dbReference type="ChEBI" id="CHEBI:58296"/>
        <dbReference type="ChEBI" id="CHEBI:456216"/>
        <dbReference type="EC" id="2.7.1.50"/>
    </reaction>
</comment>
<comment type="cofactor">
    <cofactor evidence="1">
        <name>Mg(2+)</name>
        <dbReference type="ChEBI" id="CHEBI:18420"/>
    </cofactor>
</comment>
<comment type="pathway">
    <text evidence="1">Cofactor biosynthesis; thiamine diphosphate biosynthesis; 4-methyl-5-(2-phosphoethyl)-thiazole from 5-(2-hydroxyethyl)-4-methylthiazole: step 1/1.</text>
</comment>
<comment type="similarity">
    <text evidence="1">Belongs to the Thz kinase family.</text>
</comment>
<organism>
    <name type="scientific">Escherichia coli O157:H7 (strain EC4115 / EHEC)</name>
    <dbReference type="NCBI Taxonomy" id="444450"/>
    <lineage>
        <taxon>Bacteria</taxon>
        <taxon>Pseudomonadati</taxon>
        <taxon>Pseudomonadota</taxon>
        <taxon>Gammaproteobacteria</taxon>
        <taxon>Enterobacterales</taxon>
        <taxon>Enterobacteriaceae</taxon>
        <taxon>Escherichia</taxon>
    </lineage>
</organism>
<feature type="chain" id="PRO_1000100412" description="Hydroxyethylthiazole kinase">
    <location>
        <begin position="1"/>
        <end position="262"/>
    </location>
</feature>
<feature type="binding site" evidence="1">
    <location>
        <position position="50"/>
    </location>
    <ligand>
        <name>substrate</name>
    </ligand>
</feature>
<feature type="binding site" evidence="1">
    <location>
        <position position="125"/>
    </location>
    <ligand>
        <name>ATP</name>
        <dbReference type="ChEBI" id="CHEBI:30616"/>
    </ligand>
</feature>
<feature type="binding site" evidence="1">
    <location>
        <position position="171"/>
    </location>
    <ligand>
        <name>ATP</name>
        <dbReference type="ChEBI" id="CHEBI:30616"/>
    </ligand>
</feature>
<feature type="binding site" evidence="1">
    <location>
        <position position="198"/>
    </location>
    <ligand>
        <name>substrate</name>
    </ligand>
</feature>
<reference key="1">
    <citation type="journal article" date="2011" name="Proc. Natl. Acad. Sci. U.S.A.">
        <title>Genomic anatomy of Escherichia coli O157:H7 outbreaks.</title>
        <authorList>
            <person name="Eppinger M."/>
            <person name="Mammel M.K."/>
            <person name="Leclerc J.E."/>
            <person name="Ravel J."/>
            <person name="Cebula T.A."/>
        </authorList>
    </citation>
    <scope>NUCLEOTIDE SEQUENCE [LARGE SCALE GENOMIC DNA]</scope>
    <source>
        <strain>EC4115 / EHEC</strain>
    </source>
</reference>
<gene>
    <name evidence="1" type="primary">thiM</name>
    <name type="ordered locus">ECH74115_3083</name>
</gene>
<name>THIM_ECO5E</name>